<accession>B4SLE4</accession>
<protein>
    <recommendedName>
        <fullName evidence="1">S-adenosylmethionine decarboxylase proenzyme</fullName>
        <shortName evidence="1">AdoMetDC</shortName>
        <shortName evidence="1">SAMDC</shortName>
        <ecNumber evidence="1">4.1.1.50</ecNumber>
    </recommendedName>
    <component>
        <recommendedName>
            <fullName evidence="1">S-adenosylmethionine decarboxylase beta chain</fullName>
        </recommendedName>
    </component>
    <component>
        <recommendedName>
            <fullName evidence="1">S-adenosylmethionine decarboxylase alpha chain</fullName>
        </recommendedName>
    </component>
</protein>
<organism>
    <name type="scientific">Stenotrophomonas maltophilia (strain R551-3)</name>
    <dbReference type="NCBI Taxonomy" id="391008"/>
    <lineage>
        <taxon>Bacteria</taxon>
        <taxon>Pseudomonadati</taxon>
        <taxon>Pseudomonadota</taxon>
        <taxon>Gammaproteobacteria</taxon>
        <taxon>Lysobacterales</taxon>
        <taxon>Lysobacteraceae</taxon>
        <taxon>Stenotrophomonas</taxon>
        <taxon>Stenotrophomonas maltophilia group</taxon>
    </lineage>
</organism>
<feature type="chain" id="PRO_0000364417" description="S-adenosylmethionine decarboxylase beta chain" evidence="1">
    <location>
        <begin position="1"/>
        <end position="112"/>
    </location>
</feature>
<feature type="chain" id="PRO_0000364418" description="S-adenosylmethionine decarboxylase alpha chain" evidence="1">
    <location>
        <begin position="113"/>
        <end position="264"/>
    </location>
</feature>
<feature type="active site" description="Schiff-base intermediate with substrate; via pyruvic acid" evidence="1">
    <location>
        <position position="113"/>
    </location>
</feature>
<feature type="active site" description="Proton acceptor; for processing activity" evidence="1">
    <location>
        <position position="118"/>
    </location>
</feature>
<feature type="active site" description="Proton donor; for catalytic activity" evidence="1">
    <location>
        <position position="141"/>
    </location>
</feature>
<feature type="site" description="Cleavage (non-hydrolytic); by autolysis" evidence="1">
    <location>
        <begin position="112"/>
        <end position="113"/>
    </location>
</feature>
<feature type="modified residue" description="Pyruvic acid (Ser); by autocatalysis" evidence="1">
    <location>
        <position position="113"/>
    </location>
</feature>
<proteinExistence type="inferred from homology"/>
<comment type="function">
    <text evidence="1">Catalyzes the decarboxylation of S-adenosylmethionine to S-adenosylmethioninamine (dcAdoMet), the propylamine donor required for the synthesis of the polyamines spermine and spermidine from the diamine putrescine.</text>
</comment>
<comment type="catalytic activity">
    <reaction evidence="1">
        <text>S-adenosyl-L-methionine + H(+) = S-adenosyl 3-(methylsulfanyl)propylamine + CO2</text>
        <dbReference type="Rhea" id="RHEA:15981"/>
        <dbReference type="ChEBI" id="CHEBI:15378"/>
        <dbReference type="ChEBI" id="CHEBI:16526"/>
        <dbReference type="ChEBI" id="CHEBI:57443"/>
        <dbReference type="ChEBI" id="CHEBI:59789"/>
        <dbReference type="EC" id="4.1.1.50"/>
    </reaction>
</comment>
<comment type="cofactor">
    <cofactor evidence="1">
        <name>pyruvate</name>
        <dbReference type="ChEBI" id="CHEBI:15361"/>
    </cofactor>
    <text evidence="1">Binds 1 pyruvoyl group covalently per subunit.</text>
</comment>
<comment type="pathway">
    <text evidence="1">Amine and polyamine biosynthesis; S-adenosylmethioninamine biosynthesis; S-adenosylmethioninamine from S-adenosyl-L-methionine: step 1/1.</text>
</comment>
<comment type="subunit">
    <text evidence="1">Heterooctamer of four alpha and four beta chains arranged as a tetramer of alpha/beta heterodimers.</text>
</comment>
<comment type="PTM">
    <text evidence="1">Is synthesized initially as an inactive proenzyme. Formation of the active enzyme involves a self-maturation process in which the active site pyruvoyl group is generated from an internal serine residue via an autocatalytic post-translational modification. Two non-identical subunits are generated from the proenzyme in this reaction, and the pyruvate is formed at the N-terminus of the alpha chain, which is derived from the carboxyl end of the proenzyme. The post-translation cleavage follows an unusual pathway, termed non-hydrolytic serinolysis, in which the side chain hydroxyl group of the serine supplies its oxygen atom to form the C-terminus of the beta chain, while the remainder of the serine residue undergoes an oxidative deamination to produce ammonia and the pyruvoyl group blocking the N-terminus of the alpha chain.</text>
</comment>
<comment type="similarity">
    <text evidence="1">Belongs to the prokaryotic AdoMetDC family. Type 2 subfamily.</text>
</comment>
<sequence>MVKPLPRLRLQGFNNLTKALSFNIYDVCYARTEEERQRYIEYIDEEYNADRLTQILTDVAEIIGANILNVARQDYDPQGASVTILISEEPVIDKKQAGKELISDAVVAHMDKSHITVHTYPETHPQEGIATFRADIDVATCGVISPLKALNYLIESLESDIVIMDYRVRGFTRDVKGKKHYIDHKINSIQNFLAKNIKSRYEMFDVNVYQENIFHTKMHLKDFDLDQYLFEEKAKNLSFKERMKIEALLKREIEELFHGRNLSE</sequence>
<reference key="1">
    <citation type="submission" date="2008-06" db="EMBL/GenBank/DDBJ databases">
        <title>Complete sequence of Stenotrophomonas maltophilia R551-3.</title>
        <authorList>
            <consortium name="US DOE Joint Genome Institute"/>
            <person name="Lucas S."/>
            <person name="Copeland A."/>
            <person name="Lapidus A."/>
            <person name="Glavina del Rio T."/>
            <person name="Dalin E."/>
            <person name="Tice H."/>
            <person name="Pitluck S."/>
            <person name="Chain P."/>
            <person name="Malfatti S."/>
            <person name="Shin M."/>
            <person name="Vergez L."/>
            <person name="Lang D."/>
            <person name="Schmutz J."/>
            <person name="Larimer F."/>
            <person name="Land M."/>
            <person name="Hauser L."/>
            <person name="Kyrpides N."/>
            <person name="Mikhailova N."/>
            <person name="Taghavi S."/>
            <person name="Monchy S."/>
            <person name="Newman L."/>
            <person name="Vangronsveld J."/>
            <person name="van der Lelie D."/>
            <person name="Richardson P."/>
        </authorList>
    </citation>
    <scope>NUCLEOTIDE SEQUENCE [LARGE SCALE GENOMIC DNA]</scope>
    <source>
        <strain>R551-3</strain>
    </source>
</reference>
<dbReference type="EC" id="4.1.1.50" evidence="1"/>
<dbReference type="EMBL" id="CP001111">
    <property type="protein sequence ID" value="ACF53413.1"/>
    <property type="molecule type" value="Genomic_DNA"/>
</dbReference>
<dbReference type="RefSeq" id="WP_006473908.1">
    <property type="nucleotide sequence ID" value="NC_011071.1"/>
</dbReference>
<dbReference type="SMR" id="B4SLE4"/>
<dbReference type="STRING" id="391008.Smal_3714"/>
<dbReference type="GeneID" id="86937784"/>
<dbReference type="KEGG" id="smt:Smal_3714"/>
<dbReference type="eggNOG" id="COG1586">
    <property type="taxonomic scope" value="Bacteria"/>
</dbReference>
<dbReference type="HOGENOM" id="CLU_092007_0_0_6"/>
<dbReference type="OrthoDB" id="5290709at2"/>
<dbReference type="UniPathway" id="UPA00331">
    <property type="reaction ID" value="UER00451"/>
</dbReference>
<dbReference type="Proteomes" id="UP000001867">
    <property type="component" value="Chromosome"/>
</dbReference>
<dbReference type="GO" id="GO:0005829">
    <property type="term" value="C:cytosol"/>
    <property type="evidence" value="ECO:0007669"/>
    <property type="project" value="TreeGrafter"/>
</dbReference>
<dbReference type="GO" id="GO:0004014">
    <property type="term" value="F:adenosylmethionine decarboxylase activity"/>
    <property type="evidence" value="ECO:0007669"/>
    <property type="project" value="UniProtKB-UniRule"/>
</dbReference>
<dbReference type="GO" id="GO:0008295">
    <property type="term" value="P:spermidine biosynthetic process"/>
    <property type="evidence" value="ECO:0007669"/>
    <property type="project" value="UniProtKB-UniRule"/>
</dbReference>
<dbReference type="FunFam" id="3.60.90.10:FF:000001">
    <property type="entry name" value="S-adenosylmethionine decarboxylase proenzyme"/>
    <property type="match status" value="1"/>
</dbReference>
<dbReference type="Gene3D" id="3.60.90.10">
    <property type="entry name" value="S-adenosylmethionine decarboxylase"/>
    <property type="match status" value="1"/>
</dbReference>
<dbReference type="HAMAP" id="MF_00465">
    <property type="entry name" value="AdoMetDC_2"/>
    <property type="match status" value="1"/>
</dbReference>
<dbReference type="InterPro" id="IPR003826">
    <property type="entry name" value="AdoMetDC_fam_prok"/>
</dbReference>
<dbReference type="InterPro" id="IPR009165">
    <property type="entry name" value="S-AdoMet_deCO2ase_bac"/>
</dbReference>
<dbReference type="InterPro" id="IPR016067">
    <property type="entry name" value="S-AdoMet_deCO2ase_core"/>
</dbReference>
<dbReference type="NCBIfam" id="TIGR03331">
    <property type="entry name" value="SAM_DCase_Eco"/>
    <property type="match status" value="1"/>
</dbReference>
<dbReference type="PANTHER" id="PTHR33866">
    <property type="entry name" value="S-ADENOSYLMETHIONINE DECARBOXYLASE PROENZYME"/>
    <property type="match status" value="1"/>
</dbReference>
<dbReference type="PANTHER" id="PTHR33866:SF1">
    <property type="entry name" value="S-ADENOSYLMETHIONINE DECARBOXYLASE PROENZYME"/>
    <property type="match status" value="1"/>
</dbReference>
<dbReference type="Pfam" id="PF02675">
    <property type="entry name" value="AdoMet_dc"/>
    <property type="match status" value="1"/>
</dbReference>
<dbReference type="PIRSF" id="PIRSF001356">
    <property type="entry name" value="SAM_decarboxylas"/>
    <property type="match status" value="1"/>
</dbReference>
<dbReference type="SUPFAM" id="SSF56276">
    <property type="entry name" value="S-adenosylmethionine decarboxylase"/>
    <property type="match status" value="1"/>
</dbReference>
<gene>
    <name evidence="1" type="primary">speD</name>
    <name type="ordered locus">Smal_3714</name>
</gene>
<name>SPED_STRM5</name>
<keyword id="KW-0068">Autocatalytic cleavage</keyword>
<keyword id="KW-0210">Decarboxylase</keyword>
<keyword id="KW-0456">Lyase</keyword>
<keyword id="KW-0620">Polyamine biosynthesis</keyword>
<keyword id="KW-0670">Pyruvate</keyword>
<keyword id="KW-0949">S-adenosyl-L-methionine</keyword>
<keyword id="KW-0704">Schiff base</keyword>
<keyword id="KW-0745">Spermidine biosynthesis</keyword>
<keyword id="KW-0865">Zymogen</keyword>
<evidence type="ECO:0000255" key="1">
    <source>
        <dbReference type="HAMAP-Rule" id="MF_00465"/>
    </source>
</evidence>